<feature type="chain" id="PRO_0000128985" description="DNA-directed RNA polymerase subunit omega">
    <location>
        <begin position="1"/>
        <end position="70"/>
    </location>
</feature>
<proteinExistence type="inferred from homology"/>
<sequence length="70" mass="7642">MLNPPLNQLQSKINSKYLIATTAAKRARELDERPETALLSGYHSAKPVGEALEEIASGKITPVVSDEFTM</sequence>
<protein>
    <recommendedName>
        <fullName evidence="1">DNA-directed RNA polymerase subunit omega</fullName>
        <shortName evidence="1">RNAP omega subunit</shortName>
        <ecNumber evidence="1">2.7.7.6</ecNumber>
    </recommendedName>
    <alternativeName>
        <fullName evidence="1">RNA polymerase omega subunit</fullName>
    </alternativeName>
    <alternativeName>
        <fullName evidence="1">Transcriptase subunit omega</fullName>
    </alternativeName>
</protein>
<name>RPOZ_STAHJ</name>
<organism>
    <name type="scientific">Staphylococcus haemolyticus (strain JCSC1435)</name>
    <dbReference type="NCBI Taxonomy" id="279808"/>
    <lineage>
        <taxon>Bacteria</taxon>
        <taxon>Bacillati</taxon>
        <taxon>Bacillota</taxon>
        <taxon>Bacilli</taxon>
        <taxon>Bacillales</taxon>
        <taxon>Staphylococcaceae</taxon>
        <taxon>Staphylococcus</taxon>
    </lineage>
</organism>
<gene>
    <name evidence="1" type="primary">rpoZ</name>
    <name type="ordered locus">SH1704</name>
</gene>
<comment type="function">
    <text evidence="1">Promotes RNA polymerase assembly. Latches the N- and C-terminal regions of the beta' subunit thereby facilitating its interaction with the beta and alpha subunits.</text>
</comment>
<comment type="catalytic activity">
    <reaction evidence="1">
        <text>RNA(n) + a ribonucleoside 5'-triphosphate = RNA(n+1) + diphosphate</text>
        <dbReference type="Rhea" id="RHEA:21248"/>
        <dbReference type="Rhea" id="RHEA-COMP:14527"/>
        <dbReference type="Rhea" id="RHEA-COMP:17342"/>
        <dbReference type="ChEBI" id="CHEBI:33019"/>
        <dbReference type="ChEBI" id="CHEBI:61557"/>
        <dbReference type="ChEBI" id="CHEBI:140395"/>
        <dbReference type="EC" id="2.7.7.6"/>
    </reaction>
</comment>
<comment type="subunit">
    <text evidence="1">The RNAP catalytic core consists of 2 alpha, 1 beta, 1 beta' and 1 omega subunit. When a sigma factor is associated with the core the holoenzyme is formed, which can initiate transcription.</text>
</comment>
<comment type="similarity">
    <text evidence="1">Belongs to the RNA polymerase subunit omega family.</text>
</comment>
<dbReference type="EC" id="2.7.7.6" evidence="1"/>
<dbReference type="EMBL" id="AP006716">
    <property type="protein sequence ID" value="BAE05013.1"/>
    <property type="molecule type" value="Genomic_DNA"/>
</dbReference>
<dbReference type="RefSeq" id="WP_011275989.1">
    <property type="nucleotide sequence ID" value="NC_007168.1"/>
</dbReference>
<dbReference type="SMR" id="Q4L5R2"/>
<dbReference type="GeneID" id="93781082"/>
<dbReference type="KEGG" id="sha:SH1704"/>
<dbReference type="eggNOG" id="COG1758">
    <property type="taxonomic scope" value="Bacteria"/>
</dbReference>
<dbReference type="HOGENOM" id="CLU_125406_6_0_9"/>
<dbReference type="OrthoDB" id="9815459at2"/>
<dbReference type="Proteomes" id="UP000000543">
    <property type="component" value="Chromosome"/>
</dbReference>
<dbReference type="GO" id="GO:0000428">
    <property type="term" value="C:DNA-directed RNA polymerase complex"/>
    <property type="evidence" value="ECO:0007669"/>
    <property type="project" value="UniProtKB-KW"/>
</dbReference>
<dbReference type="GO" id="GO:0003677">
    <property type="term" value="F:DNA binding"/>
    <property type="evidence" value="ECO:0007669"/>
    <property type="project" value="UniProtKB-UniRule"/>
</dbReference>
<dbReference type="GO" id="GO:0003899">
    <property type="term" value="F:DNA-directed RNA polymerase activity"/>
    <property type="evidence" value="ECO:0007669"/>
    <property type="project" value="UniProtKB-UniRule"/>
</dbReference>
<dbReference type="GO" id="GO:0006351">
    <property type="term" value="P:DNA-templated transcription"/>
    <property type="evidence" value="ECO:0007669"/>
    <property type="project" value="UniProtKB-UniRule"/>
</dbReference>
<dbReference type="Gene3D" id="3.90.940.10">
    <property type="match status" value="1"/>
</dbReference>
<dbReference type="HAMAP" id="MF_00366">
    <property type="entry name" value="RNApol_bact_RpoZ"/>
    <property type="match status" value="1"/>
</dbReference>
<dbReference type="InterPro" id="IPR003716">
    <property type="entry name" value="DNA-dir_RNA_pol_omega"/>
</dbReference>
<dbReference type="InterPro" id="IPR006110">
    <property type="entry name" value="Pol_omega/Rpo6/RPB6"/>
</dbReference>
<dbReference type="InterPro" id="IPR036161">
    <property type="entry name" value="RPB6/omega-like_sf"/>
</dbReference>
<dbReference type="NCBIfam" id="TIGR00690">
    <property type="entry name" value="rpoZ"/>
    <property type="match status" value="1"/>
</dbReference>
<dbReference type="PANTHER" id="PTHR34476">
    <property type="entry name" value="DNA-DIRECTED RNA POLYMERASE SUBUNIT OMEGA"/>
    <property type="match status" value="1"/>
</dbReference>
<dbReference type="PANTHER" id="PTHR34476:SF1">
    <property type="entry name" value="DNA-DIRECTED RNA POLYMERASE SUBUNIT OMEGA"/>
    <property type="match status" value="1"/>
</dbReference>
<dbReference type="Pfam" id="PF01192">
    <property type="entry name" value="RNA_pol_Rpb6"/>
    <property type="match status" value="1"/>
</dbReference>
<dbReference type="SMART" id="SM01409">
    <property type="entry name" value="RNA_pol_Rpb6"/>
    <property type="match status" value="1"/>
</dbReference>
<dbReference type="SUPFAM" id="SSF63562">
    <property type="entry name" value="RPB6/omega subunit-like"/>
    <property type="match status" value="1"/>
</dbReference>
<evidence type="ECO:0000255" key="1">
    <source>
        <dbReference type="HAMAP-Rule" id="MF_00366"/>
    </source>
</evidence>
<keyword id="KW-0240">DNA-directed RNA polymerase</keyword>
<keyword id="KW-0548">Nucleotidyltransferase</keyword>
<keyword id="KW-0804">Transcription</keyword>
<keyword id="KW-0808">Transferase</keyword>
<accession>Q4L5R2</accession>
<reference key="1">
    <citation type="journal article" date="2005" name="J. Bacteriol.">
        <title>Whole-genome sequencing of Staphylococcus haemolyticus uncovers the extreme plasticity of its genome and the evolution of human-colonizing staphylococcal species.</title>
        <authorList>
            <person name="Takeuchi F."/>
            <person name="Watanabe S."/>
            <person name="Baba T."/>
            <person name="Yuzawa H."/>
            <person name="Ito T."/>
            <person name="Morimoto Y."/>
            <person name="Kuroda M."/>
            <person name="Cui L."/>
            <person name="Takahashi M."/>
            <person name="Ankai A."/>
            <person name="Baba S."/>
            <person name="Fukui S."/>
            <person name="Lee J.C."/>
            <person name="Hiramatsu K."/>
        </authorList>
    </citation>
    <scope>NUCLEOTIDE SEQUENCE [LARGE SCALE GENOMIC DNA]</scope>
    <source>
        <strain>JCSC1435</strain>
    </source>
</reference>